<name>ATPI_PHYPA</name>
<proteinExistence type="inferred from homology"/>
<evidence type="ECO:0000255" key="1">
    <source>
        <dbReference type="HAMAP-Rule" id="MF_01393"/>
    </source>
</evidence>
<feature type="chain" id="PRO_0000362590" description="ATP synthase subunit a, chloroplastic">
    <location>
        <begin position="1"/>
        <end position="249"/>
    </location>
</feature>
<feature type="transmembrane region" description="Helical" evidence="1">
    <location>
        <begin position="38"/>
        <end position="58"/>
    </location>
</feature>
<feature type="transmembrane region" description="Helical" evidence="1">
    <location>
        <begin position="97"/>
        <end position="117"/>
    </location>
</feature>
<feature type="transmembrane region" description="Helical" evidence="1">
    <location>
        <begin position="136"/>
        <end position="156"/>
    </location>
</feature>
<feature type="transmembrane region" description="Helical" evidence="1">
    <location>
        <begin position="201"/>
        <end position="221"/>
    </location>
</feature>
<feature type="transmembrane region" description="Helical" evidence="1">
    <location>
        <begin position="222"/>
        <end position="242"/>
    </location>
</feature>
<organism>
    <name type="scientific">Physcomitrium patens</name>
    <name type="common">Spreading-leaved earth moss</name>
    <name type="synonym">Physcomitrella patens</name>
    <dbReference type="NCBI Taxonomy" id="3218"/>
    <lineage>
        <taxon>Eukaryota</taxon>
        <taxon>Viridiplantae</taxon>
        <taxon>Streptophyta</taxon>
        <taxon>Embryophyta</taxon>
        <taxon>Bryophyta</taxon>
        <taxon>Bryophytina</taxon>
        <taxon>Bryopsida</taxon>
        <taxon>Funariidae</taxon>
        <taxon>Funariales</taxon>
        <taxon>Funariaceae</taxon>
        <taxon>Physcomitrium</taxon>
    </lineage>
</organism>
<dbReference type="EMBL" id="AP005672">
    <property type="protein sequence ID" value="BAC85069.1"/>
    <property type="molecule type" value="Genomic_DNA"/>
</dbReference>
<dbReference type="RefSeq" id="NP_904219.1">
    <property type="nucleotide sequence ID" value="NC_005087.2"/>
</dbReference>
<dbReference type="RefSeq" id="YP_009477549.1">
    <property type="nucleotide sequence ID" value="NC_037465.1"/>
</dbReference>
<dbReference type="SMR" id="Q6YXK0"/>
<dbReference type="FunCoup" id="Q6YXK0">
    <property type="interactions" value="213"/>
</dbReference>
<dbReference type="STRING" id="3218.Q6YXK0"/>
<dbReference type="GeneID" id="2546806"/>
<dbReference type="GeneID" id="36487183"/>
<dbReference type="KEGG" id="ppp:2546806"/>
<dbReference type="InParanoid" id="Q6YXK0"/>
<dbReference type="OrthoDB" id="2303at2759"/>
<dbReference type="Proteomes" id="UP000006727">
    <property type="component" value="Chloroplast"/>
</dbReference>
<dbReference type="GO" id="GO:0009535">
    <property type="term" value="C:chloroplast thylakoid membrane"/>
    <property type="evidence" value="ECO:0007669"/>
    <property type="project" value="UniProtKB-SubCell"/>
</dbReference>
<dbReference type="GO" id="GO:0005886">
    <property type="term" value="C:plasma membrane"/>
    <property type="evidence" value="ECO:0007669"/>
    <property type="project" value="UniProtKB-UniRule"/>
</dbReference>
<dbReference type="GO" id="GO:0045259">
    <property type="term" value="C:proton-transporting ATP synthase complex"/>
    <property type="evidence" value="ECO:0007669"/>
    <property type="project" value="UniProtKB-KW"/>
</dbReference>
<dbReference type="GO" id="GO:0046933">
    <property type="term" value="F:proton-transporting ATP synthase activity, rotational mechanism"/>
    <property type="evidence" value="ECO:0007669"/>
    <property type="project" value="UniProtKB-UniRule"/>
</dbReference>
<dbReference type="CDD" id="cd00310">
    <property type="entry name" value="ATP-synt_Fo_a_6"/>
    <property type="match status" value="1"/>
</dbReference>
<dbReference type="FunFam" id="1.20.120.220:FF:000001">
    <property type="entry name" value="ATP synthase subunit a, chloroplastic"/>
    <property type="match status" value="1"/>
</dbReference>
<dbReference type="Gene3D" id="1.20.120.220">
    <property type="entry name" value="ATP synthase, F0 complex, subunit A"/>
    <property type="match status" value="1"/>
</dbReference>
<dbReference type="HAMAP" id="MF_01393">
    <property type="entry name" value="ATP_synth_a_bact"/>
    <property type="match status" value="1"/>
</dbReference>
<dbReference type="InterPro" id="IPR045082">
    <property type="entry name" value="ATP_syn_F0_a_bact/chloroplast"/>
</dbReference>
<dbReference type="InterPro" id="IPR000568">
    <property type="entry name" value="ATP_synth_F0_asu"/>
</dbReference>
<dbReference type="InterPro" id="IPR023011">
    <property type="entry name" value="ATP_synth_F0_asu_AS"/>
</dbReference>
<dbReference type="InterPro" id="IPR035908">
    <property type="entry name" value="F0_ATP_A_sf"/>
</dbReference>
<dbReference type="NCBIfam" id="TIGR01131">
    <property type="entry name" value="ATP_synt_6_or_A"/>
    <property type="match status" value="1"/>
</dbReference>
<dbReference type="PANTHER" id="PTHR42823">
    <property type="entry name" value="ATP SYNTHASE SUBUNIT A, CHLOROPLASTIC"/>
    <property type="match status" value="1"/>
</dbReference>
<dbReference type="PANTHER" id="PTHR42823:SF3">
    <property type="entry name" value="ATP SYNTHASE SUBUNIT A, CHLOROPLASTIC"/>
    <property type="match status" value="1"/>
</dbReference>
<dbReference type="Pfam" id="PF00119">
    <property type="entry name" value="ATP-synt_A"/>
    <property type="match status" value="1"/>
</dbReference>
<dbReference type="PRINTS" id="PR00123">
    <property type="entry name" value="ATPASEA"/>
</dbReference>
<dbReference type="SUPFAM" id="SSF81336">
    <property type="entry name" value="F1F0 ATP synthase subunit A"/>
    <property type="match status" value="1"/>
</dbReference>
<dbReference type="PROSITE" id="PS00449">
    <property type="entry name" value="ATPASE_A"/>
    <property type="match status" value="1"/>
</dbReference>
<geneLocation type="chloroplast"/>
<gene>
    <name evidence="1" type="primary">atpI</name>
</gene>
<keyword id="KW-0066">ATP synthesis</keyword>
<keyword id="KW-0138">CF(0)</keyword>
<keyword id="KW-0150">Chloroplast</keyword>
<keyword id="KW-0375">Hydrogen ion transport</keyword>
<keyword id="KW-0406">Ion transport</keyword>
<keyword id="KW-0472">Membrane</keyword>
<keyword id="KW-0934">Plastid</keyword>
<keyword id="KW-1185">Reference proteome</keyword>
<keyword id="KW-0793">Thylakoid</keyword>
<keyword id="KW-0812">Transmembrane</keyword>
<keyword id="KW-1133">Transmembrane helix</keyword>
<keyword id="KW-0813">Transport</keyword>
<protein>
    <recommendedName>
        <fullName evidence="1">ATP synthase subunit a, chloroplastic</fullName>
    </recommendedName>
    <alternativeName>
        <fullName evidence="1">ATP synthase F0 sector subunit a</fullName>
    </alternativeName>
    <alternativeName>
        <fullName evidence="1">F-ATPase subunit IV</fullName>
    </alternativeName>
</protein>
<reference key="1">
    <citation type="journal article" date="2003" name="Nucleic Acids Res.">
        <title>Complete chloroplast DNA sequence of the moss Physcomitrella patens: evidence for the loss and relocation of rpoA from the chloroplast to the nucleus.</title>
        <authorList>
            <person name="Sugiura C."/>
            <person name="Kobayashi Y."/>
            <person name="Setsuyuki A."/>
            <person name="Sugita C."/>
            <person name="Sugita M."/>
        </authorList>
    </citation>
    <scope>NUCLEOTIDE SEQUENCE [LARGE SCALE GENOMIC DNA]</scope>
    <source>
        <strain>cv. Gransden 2004</strain>
    </source>
</reference>
<accession>Q6YXK0</accession>
<comment type="function">
    <text evidence="1">Key component of the proton channel; it plays a direct role in the translocation of protons across the membrane.</text>
</comment>
<comment type="subunit">
    <text evidence="1">F-type ATPases have 2 components, CF(1) - the catalytic core - and CF(0) - the membrane proton channel. CF(1) has five subunits: alpha(3), beta(3), gamma(1), delta(1), epsilon(1). CF(0) has four main subunits: a, b, b' and c.</text>
</comment>
<comment type="subcellular location">
    <subcellularLocation>
        <location evidence="1">Plastid</location>
        <location evidence="1">Chloroplast thylakoid membrane</location>
        <topology evidence="1">Multi-pass membrane protein</topology>
    </subcellularLocation>
</comment>
<comment type="similarity">
    <text evidence="1">Belongs to the ATPase A chain family.</text>
</comment>
<sequence length="249" mass="27788">MHTAAQFSISTLNNLYEISSVEVGQHFYWQIGSFEVHAQVLITSWIVIAILLSLAVLATRDLQTIPTSGQNFVEYVLEFIRDLTRTQIGEEEYRPWVPFIGTMFLFIFVSNWSGALLPWRVLELPHGELAAPTNDINTTVALALLTSVAYFYAGLHKRGLNYFGKYIQPTPVLLPINILEDFTKPLSLSFRLFGNILADELVVAVLISLVPLVVPIPMMFLGLFTSAIQALIFATLAAAYIGESMEGHH</sequence>